<evidence type="ECO:0000255" key="1">
    <source>
        <dbReference type="PROSITE-ProRule" id="PRU00037"/>
    </source>
</evidence>
<evidence type="ECO:0000255" key="2">
    <source>
        <dbReference type="PROSITE-ProRule" id="PRU00129"/>
    </source>
</evidence>
<evidence type="ECO:0000269" key="3">
    <source>
    </source>
</evidence>
<evidence type="ECO:0000269" key="4">
    <source>
    </source>
</evidence>
<evidence type="ECO:0000269" key="5">
    <source>
    </source>
</evidence>
<evidence type="ECO:0000269" key="6">
    <source>
    </source>
</evidence>
<evidence type="ECO:0000269" key="7">
    <source>
    </source>
</evidence>
<feature type="chain" id="PRO_0000312628" description="Protein maternal effect lethal 26">
    <location>
        <begin position="1"/>
        <end position="395"/>
    </location>
</feature>
<feature type="domain" description="MATH" evidence="2">
    <location>
        <begin position="41"/>
        <end position="162"/>
    </location>
</feature>
<feature type="domain" description="BTB" evidence="1">
    <location>
        <begin position="201"/>
        <end position="269"/>
    </location>
</feature>
<feature type="mutagenesis site" description="Severe loss of interaction with ppfr-1 and mei-1." evidence="6">
    <original>C</original>
    <variation>Y</variation>
    <location>
        <position position="94"/>
    </location>
</feature>
<name>MEL26_CAEEL</name>
<dbReference type="EMBL" id="U67737">
    <property type="protein sequence ID" value="AAC63596.1"/>
    <property type="molecule type" value="Genomic_DNA"/>
</dbReference>
<dbReference type="EMBL" id="Z79759">
    <property type="protein sequence ID" value="CAB02139.2"/>
    <property type="molecule type" value="Genomic_DNA"/>
</dbReference>
<dbReference type="PIR" id="T28056">
    <property type="entry name" value="T28056"/>
</dbReference>
<dbReference type="RefSeq" id="NP_492449.2">
    <property type="nucleotide sequence ID" value="NM_060048.8"/>
</dbReference>
<dbReference type="SMR" id="Q94420"/>
<dbReference type="BioGRID" id="38168">
    <property type="interactions" value="72"/>
</dbReference>
<dbReference type="DIP" id="DIP-27179N"/>
<dbReference type="FunCoup" id="Q94420">
    <property type="interactions" value="148"/>
</dbReference>
<dbReference type="IntAct" id="Q94420">
    <property type="interactions" value="41"/>
</dbReference>
<dbReference type="MINT" id="Q94420"/>
<dbReference type="STRING" id="6239.ZK858.4b.1"/>
<dbReference type="MoonDB" id="Q94420">
    <property type="type" value="Predicted"/>
</dbReference>
<dbReference type="PaxDb" id="6239-ZK858.4b"/>
<dbReference type="EnsemblMetazoa" id="ZK858.4a.1">
    <property type="protein sequence ID" value="ZK858.4a.1"/>
    <property type="gene ID" value="WBGene00003209"/>
</dbReference>
<dbReference type="GeneID" id="172737"/>
<dbReference type="KEGG" id="cel:CELE_ZK858.4"/>
<dbReference type="UCSC" id="ZK858.4">
    <property type="organism name" value="c. elegans"/>
</dbReference>
<dbReference type="AGR" id="WB:WBGene00003209"/>
<dbReference type="CTD" id="172737"/>
<dbReference type="WormBase" id="ZK858.4a">
    <property type="protein sequence ID" value="CE30580"/>
    <property type="gene ID" value="WBGene00003209"/>
    <property type="gene designation" value="mel-26"/>
</dbReference>
<dbReference type="eggNOG" id="KOG1987">
    <property type="taxonomic scope" value="Eukaryota"/>
</dbReference>
<dbReference type="InParanoid" id="Q94420"/>
<dbReference type="OrthoDB" id="6359816at2759"/>
<dbReference type="PhylomeDB" id="Q94420"/>
<dbReference type="Reactome" id="R-CEL-5632684">
    <property type="pathway name" value="Hedgehog 'on' state"/>
</dbReference>
<dbReference type="Reactome" id="R-CEL-9706019">
    <property type="pathway name" value="RHOBTB3 ATPase cycle"/>
</dbReference>
<dbReference type="SignaLink" id="Q94420"/>
<dbReference type="UniPathway" id="UPA00143"/>
<dbReference type="PRO" id="PR:Q94420"/>
<dbReference type="Proteomes" id="UP000001940">
    <property type="component" value="Chromosome I"/>
</dbReference>
<dbReference type="Bgee" id="WBGene00003209">
    <property type="expression patterns" value="Expressed in germ line (C elegans) and 4 other cell types or tissues"/>
</dbReference>
<dbReference type="ExpressionAtlas" id="Q94420">
    <property type="expression patterns" value="baseline and differential"/>
</dbReference>
<dbReference type="GO" id="GO:0005938">
    <property type="term" value="C:cell cortex"/>
    <property type="evidence" value="ECO:0000314"/>
    <property type="project" value="WormBase"/>
</dbReference>
<dbReference type="GO" id="GO:0032154">
    <property type="term" value="C:cleavage furrow"/>
    <property type="evidence" value="ECO:0000314"/>
    <property type="project" value="WormBase"/>
</dbReference>
<dbReference type="GO" id="GO:0000793">
    <property type="term" value="C:condensed chromosome"/>
    <property type="evidence" value="ECO:0000314"/>
    <property type="project" value="WormBase"/>
</dbReference>
<dbReference type="GO" id="GO:0005737">
    <property type="term" value="C:cytoplasm"/>
    <property type="evidence" value="ECO:0000314"/>
    <property type="project" value="WormBase"/>
</dbReference>
<dbReference type="GO" id="GO:0005829">
    <property type="term" value="C:cytosol"/>
    <property type="evidence" value="ECO:0000250"/>
    <property type="project" value="UniProtKB"/>
</dbReference>
<dbReference type="GO" id="GO:0031674">
    <property type="term" value="C:I band"/>
    <property type="evidence" value="ECO:0000314"/>
    <property type="project" value="UniProtKB"/>
</dbReference>
<dbReference type="GO" id="GO:0031430">
    <property type="term" value="C:M band"/>
    <property type="evidence" value="ECO:0000314"/>
    <property type="project" value="UniProtKB"/>
</dbReference>
<dbReference type="GO" id="GO:0016020">
    <property type="term" value="C:membrane"/>
    <property type="evidence" value="ECO:0000314"/>
    <property type="project" value="WormBase"/>
</dbReference>
<dbReference type="GO" id="GO:0005634">
    <property type="term" value="C:nucleus"/>
    <property type="evidence" value="ECO:0000318"/>
    <property type="project" value="GO_Central"/>
</dbReference>
<dbReference type="GO" id="GO:0097602">
    <property type="term" value="F:cullin family protein binding"/>
    <property type="evidence" value="ECO:0000353"/>
    <property type="project" value="UniProtKB"/>
</dbReference>
<dbReference type="GO" id="GO:0042802">
    <property type="term" value="F:identical protein binding"/>
    <property type="evidence" value="ECO:0000353"/>
    <property type="project" value="IntAct"/>
</dbReference>
<dbReference type="GO" id="GO:0019901">
    <property type="term" value="F:protein kinase binding"/>
    <property type="evidence" value="ECO:0000353"/>
    <property type="project" value="UniProtKB"/>
</dbReference>
<dbReference type="GO" id="GO:0030674">
    <property type="term" value="F:protein-macromolecule adaptor activity"/>
    <property type="evidence" value="ECO:0000353"/>
    <property type="project" value="UniProtKB"/>
</dbReference>
<dbReference type="GO" id="GO:0031625">
    <property type="term" value="F:ubiquitin protein ligase binding"/>
    <property type="evidence" value="ECO:0000318"/>
    <property type="project" value="GO_Central"/>
</dbReference>
<dbReference type="GO" id="GO:0071233">
    <property type="term" value="P:cellular response to L-leucine"/>
    <property type="evidence" value="ECO:0000250"/>
    <property type="project" value="UniProtKB"/>
</dbReference>
<dbReference type="GO" id="GO:0009792">
    <property type="term" value="P:embryo development ending in birth or egg hatching"/>
    <property type="evidence" value="ECO:0000315"/>
    <property type="project" value="UniProtKB"/>
</dbReference>
<dbReference type="GO" id="GO:0000132">
    <property type="term" value="P:establishment of mitotic spindle orientation"/>
    <property type="evidence" value="ECO:0000315"/>
    <property type="project" value="UniProtKB"/>
</dbReference>
<dbReference type="GO" id="GO:0010507">
    <property type="term" value="P:negative regulation of autophagy"/>
    <property type="evidence" value="ECO:0000250"/>
    <property type="project" value="UniProtKB"/>
</dbReference>
<dbReference type="GO" id="GO:0030307">
    <property type="term" value="P:positive regulation of cell growth"/>
    <property type="evidence" value="ECO:0000250"/>
    <property type="project" value="UniProtKB"/>
</dbReference>
<dbReference type="GO" id="GO:1904263">
    <property type="term" value="P:positive regulation of TORC1 signaling"/>
    <property type="evidence" value="ECO:0000315"/>
    <property type="project" value="UniProtKB"/>
</dbReference>
<dbReference type="GO" id="GO:0043161">
    <property type="term" value="P:proteasome-mediated ubiquitin-dependent protein catabolic process"/>
    <property type="evidence" value="ECO:0000250"/>
    <property type="project" value="UniProtKB"/>
</dbReference>
<dbReference type="GO" id="GO:0030163">
    <property type="term" value="P:protein catabolic process"/>
    <property type="evidence" value="ECO:0000315"/>
    <property type="project" value="WormBase"/>
</dbReference>
<dbReference type="GO" id="GO:0000209">
    <property type="term" value="P:protein polyubiquitination"/>
    <property type="evidence" value="ECO:0000314"/>
    <property type="project" value="UniProtKB"/>
</dbReference>
<dbReference type="GO" id="GO:0032888">
    <property type="term" value="P:regulation of mitotic spindle elongation"/>
    <property type="evidence" value="ECO:0000315"/>
    <property type="project" value="UniProtKB"/>
</dbReference>
<dbReference type="GO" id="GO:0030162">
    <property type="term" value="P:regulation of proteolysis"/>
    <property type="evidence" value="ECO:0000318"/>
    <property type="project" value="GO_Central"/>
</dbReference>
<dbReference type="GO" id="GO:0071688">
    <property type="term" value="P:striated muscle myosin thick filament assembly"/>
    <property type="evidence" value="ECO:0000315"/>
    <property type="project" value="UniProtKB"/>
</dbReference>
<dbReference type="FunFam" id="2.60.210.10:FF:000026">
    <property type="entry name" value="Protein maternal effect lethal 26"/>
    <property type="match status" value="1"/>
</dbReference>
<dbReference type="FunFam" id="3.30.710.10:FF:000159">
    <property type="entry name" value="Speckle-type POZ protein B"/>
    <property type="match status" value="1"/>
</dbReference>
<dbReference type="Gene3D" id="1.25.40.420">
    <property type="match status" value="1"/>
</dbReference>
<dbReference type="Gene3D" id="2.60.210.10">
    <property type="entry name" value="Apoptosis, Tumor Necrosis Factor Receptor Associated Protein 2, Chain A"/>
    <property type="match status" value="1"/>
</dbReference>
<dbReference type="Gene3D" id="3.30.710.10">
    <property type="entry name" value="Potassium Channel Kv1.1, Chain A"/>
    <property type="match status" value="1"/>
</dbReference>
<dbReference type="InterPro" id="IPR000210">
    <property type="entry name" value="BTB/POZ_dom"/>
</dbReference>
<dbReference type="InterPro" id="IPR002083">
    <property type="entry name" value="MATH/TRAF_dom"/>
</dbReference>
<dbReference type="InterPro" id="IPR011333">
    <property type="entry name" value="SKP1/BTB/POZ_sf"/>
</dbReference>
<dbReference type="InterPro" id="IPR008974">
    <property type="entry name" value="TRAF-like"/>
</dbReference>
<dbReference type="PANTHER" id="PTHR24413">
    <property type="entry name" value="SPECKLE-TYPE POZ PROTEIN"/>
    <property type="match status" value="1"/>
</dbReference>
<dbReference type="Pfam" id="PF00651">
    <property type="entry name" value="BTB"/>
    <property type="match status" value="1"/>
</dbReference>
<dbReference type="Pfam" id="PF22486">
    <property type="entry name" value="MATH_2"/>
    <property type="match status" value="1"/>
</dbReference>
<dbReference type="SMART" id="SM00225">
    <property type="entry name" value="BTB"/>
    <property type="match status" value="1"/>
</dbReference>
<dbReference type="SMART" id="SM00061">
    <property type="entry name" value="MATH"/>
    <property type="match status" value="1"/>
</dbReference>
<dbReference type="SUPFAM" id="SSF54695">
    <property type="entry name" value="POZ domain"/>
    <property type="match status" value="1"/>
</dbReference>
<dbReference type="SUPFAM" id="SSF49599">
    <property type="entry name" value="TRAF domain-like"/>
    <property type="match status" value="1"/>
</dbReference>
<dbReference type="PROSITE" id="PS50097">
    <property type="entry name" value="BTB"/>
    <property type="match status" value="1"/>
</dbReference>
<dbReference type="PROSITE" id="PS50144">
    <property type="entry name" value="MATH"/>
    <property type="match status" value="1"/>
</dbReference>
<proteinExistence type="evidence at protein level"/>
<reference key="1">
    <citation type="journal article" date="1998" name="Genetics">
        <title>Genetic and molecular characterization of the Caenorhabditis elegans gene, mel-26, a postmeiotic negative regulator of mei-1, a meiotic-specific spindle component.</title>
        <authorList>
            <person name="Dow M.R."/>
            <person name="Mains P.E."/>
        </authorList>
    </citation>
    <scope>NUCLEOTIDE SEQUENCE [GENOMIC DNA]</scope>
    <source>
        <strain>Bristol N2</strain>
    </source>
</reference>
<reference key="2">
    <citation type="journal article" date="1998" name="Science">
        <title>Genome sequence of the nematode C. elegans: a platform for investigating biology.</title>
        <authorList>
            <consortium name="The C. elegans sequencing consortium"/>
        </authorList>
    </citation>
    <scope>NUCLEOTIDE SEQUENCE [LARGE SCALE GENOMIC DNA]</scope>
    <source>
        <strain>Bristol N2</strain>
    </source>
</reference>
<reference key="3">
    <citation type="journal article" date="2003" name="Nat. Cell Biol.">
        <title>Targeting of protein ubiquitination by BTB-Cullin 3-Roc1 ubiquitin ligases.</title>
        <authorList>
            <person name="Furukawa M."/>
            <person name="He Y.J."/>
            <person name="Borchers C."/>
            <person name="Xiong Y."/>
        </authorList>
    </citation>
    <scope>FUNCTION AS AN E3 UBIQUITIN-PROTEIN LIGASE</scope>
    <scope>INTERACTION WITH CUL3 AND MEI-1</scope>
</reference>
<reference key="4">
    <citation type="journal article" date="2003" name="Nature">
        <title>BTB proteins are substrate-specific adaptors in an SCF-like modular ubiquitin ligase containing CUL-3.</title>
        <authorList>
            <person name="Xu L."/>
            <person name="Wei Y."/>
            <person name="Reboul J."/>
            <person name="Vaglio P."/>
            <person name="Shin T.H."/>
            <person name="Vidal M."/>
            <person name="Elledge S.J."/>
            <person name="Harper J.W."/>
        </authorList>
    </citation>
    <scope>FUNCTION AS AN E3 UBIQUITIN-PROTEIN LIGASE</scope>
    <scope>INTERACTION WITH CUL3</scope>
</reference>
<reference key="5">
    <citation type="journal article" date="2012" name="Mol. Biol. Cell">
        <title>UNC-89 (obscurin) binds to MEL-26, a BTB-domain protein, and affects the function of MEI-1 (katanin) in striated muscle of Caenorhabditis elegans.</title>
        <authorList>
            <person name="Wilson K.J."/>
            <person name="Qadota H."/>
            <person name="Mains P.E."/>
            <person name="Benian G.M."/>
        </authorList>
    </citation>
    <scope>FUNCTION</scope>
    <scope>INTERACTION WITH UNC-89; CUL-3 AND MEI-1</scope>
    <scope>SUBCELLULAR LOCATION</scope>
    <scope>TISSUE SPECIFICITY</scope>
    <scope>DISRUPTION PHENOTYPE</scope>
</reference>
<reference key="6">
    <citation type="journal article" date="2013" name="J. Cell Biol.">
        <title>Microtubule severing by the katanin complex is activated by PPFR-1-dependent MEI-1 dephosphorylation.</title>
        <authorList>
            <person name="Gomes J.E."/>
            <person name="Tavernier N."/>
            <person name="Richaudeau B."/>
            <person name="Formstecher E."/>
            <person name="Boulin T."/>
            <person name="Mains P.E."/>
            <person name="Dumont J."/>
            <person name="Pintard L."/>
        </authorList>
    </citation>
    <scope>FUNCTION</scope>
    <scope>INTERACTION WITH MEI-1 AND PPFR-1</scope>
    <scope>MUTAGENESIS OF CYS-94</scope>
</reference>
<reference key="7">
    <citation type="journal article" date="2018" name="Nature">
        <title>KLHL22 activates amino-acid-dependent mTORC1 signalling to promote tumorigenesis and ageing.</title>
        <authorList>
            <person name="Chen J."/>
            <person name="Ou Y."/>
            <person name="Yang Y."/>
            <person name="Li W."/>
            <person name="Xu Y."/>
            <person name="Xie Y."/>
            <person name="Liu Y."/>
        </authorList>
    </citation>
    <scope>FUNCTION</scope>
    <scope>DISRUPTION PHENOTYPE</scope>
</reference>
<accession>Q94420</accession>
<accession>Q94139</accession>
<comment type="function">
    <text evidence="3 4 5 6 7">Probable substrate-specific adapter of an E3 ubiquitin-protein ligase complex which mediates the ubiquitination and subsequent proteasomal degradation of target proteins (PubMed:13679922, PubMed:14528312, PubMed:23918937). Controls degradation of microtubule severing protein mei-1 after meiosis (PubMed:14528312). Controls degradation of ppfr-1, the regulatory subunit of PP4 complex, after meiosis (PubMed:23918937). In body wall muscles, involved in the organization of myosin thick filaments, likely by regulating the degradation of mei-1 downstream of unc-89 (PubMed:22621901). May also activate the TORC1 pathway (PubMed:29769719).</text>
</comment>
<comment type="pathway">
    <text>Protein modification; protein ubiquitination.</text>
</comment>
<comment type="subunit">
    <text evidence="3 4 5 6">Interacts (via BTB domain) with cul-3 (PubMed:13679922, PubMed:14528312, PubMed:22621901). Seems to be a component of a E3 ubiquitin-protein ligase complex containing cul-3 (PubMed:13679922, PubMed:14528312). Interacts (probably via MATH domain) with mei-1, which targets mei-1 for ubiquitin-mediated proteolysis (PubMed:14528312, PubMed:22621901, PubMed:23918937). Interacts (probably via MATH domain) with ppfr-1, the regulatory subunit of the PP4 complex; targets ppfr-1 for ubiquitin-mediated proteolysis (PubMed:23918937). May interact (via MATH domain) with unc-89 (via Ig-like C2-type domain 2/3 and, Ig-like C2-type domain 50 and fibronectin type-III domain 2) (PubMed:22621901).</text>
</comment>
<comment type="interaction">
    <interactant intactId="EBI-320790">
        <id>Q94420</id>
    </interactant>
    <interactant intactId="EBI-314244">
        <id>Q09230</id>
        <label>C05C10.5</label>
    </interactant>
    <organismsDiffer>false</organismsDiffer>
    <experiments>4</experiments>
</comment>
<comment type="interaction">
    <interactant intactId="EBI-320790">
        <id>Q94420</id>
    </interactant>
    <interactant intactId="EBI-314179">
        <id>Q21648</id>
        <label>CELE_R02F2.5</label>
    </interactant>
    <organismsDiffer>false</organismsDiffer>
    <experiments>3</experiments>
</comment>
<comment type="interaction">
    <interactant intactId="EBI-320790">
        <id>Q94420</id>
    </interactant>
    <interactant intactId="EBI-332478">
        <id>Q9NF71</id>
        <label>CELE_Y105C5A.1</label>
    </interactant>
    <organismsDiffer>false</organismsDiffer>
    <experiments>4</experiments>
</comment>
<comment type="interaction">
    <interactant intactId="EBI-320790">
        <id>Q94420</id>
    </interactant>
    <interactant intactId="EBI-593075">
        <id>Q17391</id>
        <label>cul-3</label>
    </interactant>
    <organismsDiffer>false</organismsDiffer>
    <experiments>3</experiments>
</comment>
<comment type="interaction">
    <interactant intactId="EBI-320790">
        <id>Q94420</id>
    </interactant>
    <interactant intactId="EBI-323248">
        <id>P34808</id>
        <label>mei-1</label>
    </interactant>
    <organismsDiffer>false</organismsDiffer>
    <experiments>6</experiments>
</comment>
<comment type="interaction">
    <interactant intactId="EBI-320790">
        <id>Q94420</id>
    </interactant>
    <interactant intactId="EBI-521381">
        <id>P34808-2</id>
        <label>mei-1</label>
    </interactant>
    <organismsDiffer>false</organismsDiffer>
    <experiments>3</experiments>
</comment>
<comment type="interaction">
    <interactant intactId="EBI-320790">
        <id>Q94420</id>
    </interactant>
    <interactant intactId="EBI-320790">
        <id>Q94420</id>
        <label>mel-26</label>
    </interactant>
    <organismsDiffer>false</organismsDiffer>
    <experiments>7</experiments>
</comment>
<comment type="interaction">
    <interactant intactId="EBI-320790">
        <id>Q94420</id>
    </interactant>
    <interactant intactId="EBI-317604">
        <id>Q9GYQ9</id>
        <label>ntl-4</label>
    </interactant>
    <organismsDiffer>false</organismsDiffer>
    <experiments>3</experiments>
</comment>
<comment type="interaction">
    <interactant intactId="EBI-320790">
        <id>Q94420</id>
    </interactant>
    <interactant intactId="EBI-6691815">
        <id>G5ECH5</id>
        <label>ppfr-1</label>
    </interactant>
    <organismsDiffer>false</organismsDiffer>
    <experiments>4</experiments>
</comment>
<comment type="interaction">
    <interactant intactId="EBI-320790">
        <id>Q94420</id>
    </interactant>
    <interactant intactId="EBI-2421364">
        <id>Q9XW53</id>
        <label>rga-2</label>
    </interactant>
    <organismsDiffer>false</organismsDiffer>
    <experiments>3</experiments>
</comment>
<comment type="interaction">
    <interactant intactId="EBI-320790">
        <id>Q94420</id>
    </interactant>
    <interactant intactId="EBI-313647">
        <id>P55853</id>
        <label>smo-1</label>
    </interactant>
    <organismsDiffer>false</organismsDiffer>
    <experiments>5</experiments>
</comment>
<comment type="subcellular location">
    <subcellularLocation>
        <location evidence="5">Cytoplasm</location>
        <location evidence="5">Myofibril</location>
        <location evidence="5">Sarcomere</location>
        <location evidence="5">M line</location>
    </subcellularLocation>
    <subcellularLocation>
        <location evidence="5">Cytoplasm</location>
        <location evidence="5">Myofibril</location>
        <location evidence="5">Sarcomere</location>
        <location evidence="5">I band</location>
    </subcellularLocation>
    <text evidence="5">Colocalizes with unc-89 to the M line.</text>
</comment>
<comment type="tissue specificity">
    <text evidence="5">Expressed in body wall muscles.</text>
</comment>
<comment type="disruption phenotype">
    <text evidence="5 7">RNAi-mediated knockdown at L1 larval stage results in the disorganization of myosin thick filaments in adult body wall muscles characterized by the formation of abnormal myosin heavy chain myo-3 aggregates and V-shaped crossing of A-bands (PubMed:22621901). RNAi-mediated knockdown of mel-26 also results in increased lifespan (PubMed:29769719).</text>
</comment>
<organism>
    <name type="scientific">Caenorhabditis elegans</name>
    <dbReference type="NCBI Taxonomy" id="6239"/>
    <lineage>
        <taxon>Eukaryota</taxon>
        <taxon>Metazoa</taxon>
        <taxon>Ecdysozoa</taxon>
        <taxon>Nematoda</taxon>
        <taxon>Chromadorea</taxon>
        <taxon>Rhabditida</taxon>
        <taxon>Rhabditina</taxon>
        <taxon>Rhabditomorpha</taxon>
        <taxon>Rhabditoidea</taxon>
        <taxon>Rhabditidae</taxon>
        <taxon>Peloderinae</taxon>
        <taxon>Caenorhabditis</taxon>
    </lineage>
</organism>
<protein>
    <recommendedName>
        <fullName>Protein maternal effect lethal 26</fullName>
    </recommendedName>
</protein>
<sequence length="395" mass="44492">MEPRIDGGVFIGGIGNSGNEMCSNGVPALGVSSQTEIKVEKVQHTWTVKNFSHCYQEYLENFVYLQRGDEQLTWSIKIYPKGNGENNKDFVFLCLNRVINNNVKAGKIGFKSQFKLRTAENKDIEMRIHPNPSHSDYVSYIKRDVLFPQIMPRDMIIVNVEIDVAVETITTTNEPIQFEPTNSEQQLIEDYQRLFSQELLCDFAINVNGKIIRAHKAVLAARSPVFNAMLTHQDTDEAKSSMMYINDMDYDVIYEMVYYIYCGRCNKDITDMATALLIAADKYRLEELKSHCEKYLVENINIENACSLLIIGDLYSAPKLRKRAVTYILARPKNVTGTPGWEDILKGHPNLITDIFSQIDRQSSTGATSSVSNLPGVPMDIPGITGNIVPPPSGL</sequence>
<gene>
    <name type="primary">mel-26</name>
    <name type="ORF">ZK858.4</name>
</gene>
<keyword id="KW-0963">Cytoplasm</keyword>
<keyword id="KW-1185">Reference proteome</keyword>
<keyword id="KW-0833">Ubl conjugation pathway</keyword>